<comment type="subcellular location">
    <subcellularLocation>
        <location evidence="1">Cytoplasm</location>
    </subcellularLocation>
</comment>
<comment type="similarity">
    <text evidence="1">Belongs to the CutC family.</text>
</comment>
<comment type="caution">
    <text evidence="1">Once thought to be involved in copper homeostasis, experiments in E.coli have shown this is not the case.</text>
</comment>
<evidence type="ECO:0000255" key="1">
    <source>
        <dbReference type="HAMAP-Rule" id="MF_00795"/>
    </source>
</evidence>
<proteinExistence type="inferred from homology"/>
<feature type="chain" id="PRO_0000215068" description="PF03932 family protein CutC">
    <location>
        <begin position="1"/>
        <end position="244"/>
    </location>
</feature>
<keyword id="KW-0963">Cytoplasm</keyword>
<keyword id="KW-1185">Reference proteome</keyword>
<protein>
    <recommendedName>
        <fullName evidence="1">PF03932 family protein CutC</fullName>
    </recommendedName>
</protein>
<reference key="1">
    <citation type="journal article" date="2001" name="Proc. Natl. Acad. Sci. U.S.A.">
        <title>Complete genomic sequence of Pasteurella multocida Pm70.</title>
        <authorList>
            <person name="May B.J."/>
            <person name="Zhang Q."/>
            <person name="Li L.L."/>
            <person name="Paustian M.L."/>
            <person name="Whittam T.S."/>
            <person name="Kapur V."/>
        </authorList>
    </citation>
    <scope>NUCLEOTIDE SEQUENCE [LARGE SCALE GENOMIC DNA]</scope>
    <source>
        <strain>Pm70</strain>
    </source>
</reference>
<gene>
    <name evidence="1" type="primary">cutC</name>
    <name type="ordered locus">PM0526</name>
</gene>
<sequence>MKIEVCIDNIESVHIAQNAGADRLELCACLSVGGVTPSYSLIKSAVDFANIPCYVMIRPRAGDFLFSTQEVNMMLDDIHLAKQLGAQGIVIGALTKHADIDLSVCETLIQAAEGLGVTFHRAFDLCRDPVTSLEQLIQLGCERVLTSGQKASAVEGQPLIKQLVSQASNRIRIMAGAGINAQNAALLVKNTGITELHLSGKGYRLSEMPYHANAVMGENSEDDQKIWRTDFATIRAVKTSVEKY</sequence>
<name>CUTC_PASMU</name>
<dbReference type="EMBL" id="AE004439">
    <property type="protein sequence ID" value="AAK02610.1"/>
    <property type="molecule type" value="Genomic_DNA"/>
</dbReference>
<dbReference type="RefSeq" id="WP_010906707.1">
    <property type="nucleotide sequence ID" value="NC_002663.1"/>
</dbReference>
<dbReference type="SMR" id="Q9CNA6"/>
<dbReference type="STRING" id="272843.PM0526"/>
<dbReference type="EnsemblBacteria" id="AAK02610">
    <property type="protein sequence ID" value="AAK02610"/>
    <property type="gene ID" value="PM0526"/>
</dbReference>
<dbReference type="KEGG" id="pmu:PM0526"/>
<dbReference type="PATRIC" id="fig|272843.6.peg.532"/>
<dbReference type="HOGENOM" id="CLU_050555_3_1_6"/>
<dbReference type="OrthoDB" id="9815677at2"/>
<dbReference type="Proteomes" id="UP000000809">
    <property type="component" value="Chromosome"/>
</dbReference>
<dbReference type="GO" id="GO:0005737">
    <property type="term" value="C:cytoplasm"/>
    <property type="evidence" value="ECO:0007669"/>
    <property type="project" value="UniProtKB-SubCell"/>
</dbReference>
<dbReference type="GO" id="GO:0005507">
    <property type="term" value="F:copper ion binding"/>
    <property type="evidence" value="ECO:0007669"/>
    <property type="project" value="TreeGrafter"/>
</dbReference>
<dbReference type="FunFam" id="3.20.20.380:FF:000001">
    <property type="entry name" value="Copper homeostasis protein CutC"/>
    <property type="match status" value="1"/>
</dbReference>
<dbReference type="Gene3D" id="3.20.20.380">
    <property type="entry name" value="Copper homeostasis (CutC) domain"/>
    <property type="match status" value="1"/>
</dbReference>
<dbReference type="HAMAP" id="MF_00795">
    <property type="entry name" value="CutC"/>
    <property type="match status" value="1"/>
</dbReference>
<dbReference type="InterPro" id="IPR005627">
    <property type="entry name" value="CutC-like"/>
</dbReference>
<dbReference type="InterPro" id="IPR036822">
    <property type="entry name" value="CutC-like_dom_sf"/>
</dbReference>
<dbReference type="PANTHER" id="PTHR12598">
    <property type="entry name" value="COPPER HOMEOSTASIS PROTEIN CUTC"/>
    <property type="match status" value="1"/>
</dbReference>
<dbReference type="PANTHER" id="PTHR12598:SF0">
    <property type="entry name" value="COPPER HOMEOSTASIS PROTEIN CUTC HOMOLOG"/>
    <property type="match status" value="1"/>
</dbReference>
<dbReference type="Pfam" id="PF03932">
    <property type="entry name" value="CutC"/>
    <property type="match status" value="1"/>
</dbReference>
<dbReference type="SUPFAM" id="SSF110395">
    <property type="entry name" value="CutC-like"/>
    <property type="match status" value="1"/>
</dbReference>
<organism>
    <name type="scientific">Pasteurella multocida (strain Pm70)</name>
    <dbReference type="NCBI Taxonomy" id="272843"/>
    <lineage>
        <taxon>Bacteria</taxon>
        <taxon>Pseudomonadati</taxon>
        <taxon>Pseudomonadota</taxon>
        <taxon>Gammaproteobacteria</taxon>
        <taxon>Pasteurellales</taxon>
        <taxon>Pasteurellaceae</taxon>
        <taxon>Pasteurella</taxon>
    </lineage>
</organism>
<accession>Q9CNA6</accession>